<feature type="chain" id="PRO_0000255234" description="Lipid-A-disaccharide synthase">
    <location>
        <begin position="1"/>
        <end position="432"/>
    </location>
</feature>
<feature type="region of interest" description="Disordered" evidence="2">
    <location>
        <begin position="1"/>
        <end position="35"/>
    </location>
</feature>
<feature type="compositionally biased region" description="Polar residues" evidence="2">
    <location>
        <begin position="1"/>
        <end position="11"/>
    </location>
</feature>
<keyword id="KW-0328">Glycosyltransferase</keyword>
<keyword id="KW-0441">Lipid A biosynthesis</keyword>
<keyword id="KW-0444">Lipid biosynthesis</keyword>
<keyword id="KW-0443">Lipid metabolism</keyword>
<keyword id="KW-1185">Reference proteome</keyword>
<keyword id="KW-0808">Transferase</keyword>
<protein>
    <recommendedName>
        <fullName evidence="1">Lipid-A-disaccharide synthase</fullName>
        <ecNumber evidence="1">2.4.1.182</ecNumber>
    </recommendedName>
</protein>
<evidence type="ECO:0000255" key="1">
    <source>
        <dbReference type="HAMAP-Rule" id="MF_00392"/>
    </source>
</evidence>
<evidence type="ECO:0000256" key="2">
    <source>
        <dbReference type="SAM" id="MobiDB-lite"/>
    </source>
</evidence>
<name>LPXB_XANOR</name>
<organism>
    <name type="scientific">Xanthomonas oryzae pv. oryzae (strain KACC10331 / KXO85)</name>
    <dbReference type="NCBI Taxonomy" id="291331"/>
    <lineage>
        <taxon>Bacteria</taxon>
        <taxon>Pseudomonadati</taxon>
        <taxon>Pseudomonadota</taxon>
        <taxon>Gammaproteobacteria</taxon>
        <taxon>Lysobacterales</taxon>
        <taxon>Lysobacteraceae</taxon>
        <taxon>Xanthomonas</taxon>
    </lineage>
</organism>
<sequence length="432" mass="46688">MTGIGNQTSGIETGVHDRAPADGEPTALPISHSPLPIPGAHARPPRFALIAGEASGDILGAGLIAQLRLRYPNAEFVGIGGDAMRGAGCQTWFDASELAVMGLTEVLRHLPRLLKLRSAFRERVLAWKPDVFIGIDAPDFNLPVERWLKQRGIKTVHYVSPSVWAWREKRAEKIAVSADLVLCLFPMEPPIYAKHGVDARFVGHPMADDIAYQADRDAARATLGLSASSTVLAVLPGSRHGEISRLGDTFLQAAWLVCEHIPNLHVLVPAANAGCKQLLAEQLSRSSLPVMRSHLINGQARTAMLAADVVLLASGTATLEAMLVKRPMVVGYKVAPLTYRIVKLLGLIKVNRYALPNILANDDLAPELMQDDCMPERLCVALLDWLKHPAKVAALQPRYLALHAALRRDASARAAEAVAGLLQGRDWSGANI</sequence>
<accession>Q5H1F3</accession>
<proteinExistence type="inferred from homology"/>
<gene>
    <name evidence="1" type="primary">lpxB</name>
    <name type="ordered locus">XOO1964</name>
</gene>
<reference key="1">
    <citation type="journal article" date="2005" name="Nucleic Acids Res.">
        <title>The genome sequence of Xanthomonas oryzae pathovar oryzae KACC10331, the bacterial blight pathogen of rice.</title>
        <authorList>
            <person name="Lee B.-M."/>
            <person name="Park Y.-J."/>
            <person name="Park D.-S."/>
            <person name="Kang H.-W."/>
            <person name="Kim J.-G."/>
            <person name="Song E.-S."/>
            <person name="Park I.-C."/>
            <person name="Yoon U.-H."/>
            <person name="Hahn J.-H."/>
            <person name="Koo B.-S."/>
            <person name="Lee G.-B."/>
            <person name="Kim H."/>
            <person name="Park H.-S."/>
            <person name="Yoon K.-O."/>
            <person name="Kim J.-H."/>
            <person name="Jung C.-H."/>
            <person name="Koh N.-H."/>
            <person name="Seo J.-S."/>
            <person name="Go S.-J."/>
        </authorList>
    </citation>
    <scope>NUCLEOTIDE SEQUENCE [LARGE SCALE GENOMIC DNA]</scope>
    <source>
        <strain>KACC10331 / KXO85</strain>
    </source>
</reference>
<dbReference type="EC" id="2.4.1.182" evidence="1"/>
<dbReference type="EMBL" id="AE013598">
    <property type="protein sequence ID" value="AAW75218.1"/>
    <property type="molecule type" value="Genomic_DNA"/>
</dbReference>
<dbReference type="SMR" id="Q5H1F3"/>
<dbReference type="STRING" id="291331.XOO1964"/>
<dbReference type="CAZy" id="GT19">
    <property type="family name" value="Glycosyltransferase Family 19"/>
</dbReference>
<dbReference type="KEGG" id="xoo:XOO1964"/>
<dbReference type="HOGENOM" id="CLU_036577_3_0_6"/>
<dbReference type="UniPathway" id="UPA00973"/>
<dbReference type="Proteomes" id="UP000006735">
    <property type="component" value="Chromosome"/>
</dbReference>
<dbReference type="GO" id="GO:0016020">
    <property type="term" value="C:membrane"/>
    <property type="evidence" value="ECO:0007669"/>
    <property type="project" value="GOC"/>
</dbReference>
<dbReference type="GO" id="GO:0008915">
    <property type="term" value="F:lipid-A-disaccharide synthase activity"/>
    <property type="evidence" value="ECO:0007669"/>
    <property type="project" value="UniProtKB-UniRule"/>
</dbReference>
<dbReference type="GO" id="GO:0005543">
    <property type="term" value="F:phospholipid binding"/>
    <property type="evidence" value="ECO:0007669"/>
    <property type="project" value="TreeGrafter"/>
</dbReference>
<dbReference type="GO" id="GO:0009245">
    <property type="term" value="P:lipid A biosynthetic process"/>
    <property type="evidence" value="ECO:0007669"/>
    <property type="project" value="UniProtKB-UniRule"/>
</dbReference>
<dbReference type="CDD" id="cd01635">
    <property type="entry name" value="Glycosyltransferase_GTB-type"/>
    <property type="match status" value="1"/>
</dbReference>
<dbReference type="HAMAP" id="MF_00392">
    <property type="entry name" value="LpxB"/>
    <property type="match status" value="1"/>
</dbReference>
<dbReference type="InterPro" id="IPR003835">
    <property type="entry name" value="Glyco_trans_19"/>
</dbReference>
<dbReference type="NCBIfam" id="TIGR00215">
    <property type="entry name" value="lpxB"/>
    <property type="match status" value="1"/>
</dbReference>
<dbReference type="PANTHER" id="PTHR30372">
    <property type="entry name" value="LIPID-A-DISACCHARIDE SYNTHASE"/>
    <property type="match status" value="1"/>
</dbReference>
<dbReference type="PANTHER" id="PTHR30372:SF4">
    <property type="entry name" value="LIPID-A-DISACCHARIDE SYNTHASE, MITOCHONDRIAL-RELATED"/>
    <property type="match status" value="1"/>
</dbReference>
<dbReference type="Pfam" id="PF02684">
    <property type="entry name" value="LpxB"/>
    <property type="match status" value="1"/>
</dbReference>
<dbReference type="SUPFAM" id="SSF53756">
    <property type="entry name" value="UDP-Glycosyltransferase/glycogen phosphorylase"/>
    <property type="match status" value="1"/>
</dbReference>
<comment type="function">
    <text evidence="1">Condensation of UDP-2,3-diacylglucosamine and 2,3-diacylglucosamine-1-phosphate to form lipid A disaccharide, a precursor of lipid A, a phosphorylated glycolipid that anchors the lipopolysaccharide to the outer membrane of the cell.</text>
</comment>
<comment type="catalytic activity">
    <reaction evidence="1">
        <text>a lipid X + a UDP-2-N,3-O-bis[(3R)-3-hydroxyacyl]-alpha-D-glucosamine = a lipid A disaccharide + UDP + H(+)</text>
        <dbReference type="Rhea" id="RHEA:67828"/>
        <dbReference type="ChEBI" id="CHEBI:15378"/>
        <dbReference type="ChEBI" id="CHEBI:58223"/>
        <dbReference type="ChEBI" id="CHEBI:137748"/>
        <dbReference type="ChEBI" id="CHEBI:176338"/>
        <dbReference type="ChEBI" id="CHEBI:176343"/>
        <dbReference type="EC" id="2.4.1.182"/>
    </reaction>
</comment>
<comment type="pathway">
    <text evidence="1">Bacterial outer membrane biogenesis; LPS lipid A biosynthesis.</text>
</comment>
<comment type="similarity">
    <text evidence="1">Belongs to the LpxB family.</text>
</comment>